<evidence type="ECO:0000255" key="1">
    <source>
        <dbReference type="HAMAP-Rule" id="MF_00056"/>
    </source>
</evidence>
<reference key="1">
    <citation type="journal article" date="2004" name="Science">
        <title>A predator unmasked: life cycle of Bdellovibrio bacteriovorus from a genomic perspective.</title>
        <authorList>
            <person name="Rendulic S."/>
            <person name="Jagtap P."/>
            <person name="Rosinus A."/>
            <person name="Eppinger M."/>
            <person name="Baar C."/>
            <person name="Lanz C."/>
            <person name="Keller H."/>
            <person name="Lambert C."/>
            <person name="Evans K.J."/>
            <person name="Goesmann A."/>
            <person name="Meyer F."/>
            <person name="Sockett R.E."/>
            <person name="Schuster S.C."/>
        </authorList>
    </citation>
    <scope>NUCLEOTIDE SEQUENCE [LARGE SCALE GENOMIC DNA]</scope>
    <source>
        <strain>ATCC 15356 / DSM 50701 / NCIMB 9529 / HD100</strain>
    </source>
</reference>
<name>KDSA_BDEBA</name>
<sequence length="288" mass="31389">MVLPMQNKIVKIGNIEVANDKPFVLFAGLNVLESRDLAMQVCEHFVKVTDKLKIPYVFKSSFDKANRSSIHSYRGPGMEEGLKIFAELKKTFGVKVITDVHEIHQAKPVAEVVDVIQLPAFLARQTDLVEAMARTGAVINVKKPQFLSPGQMGNIVDKFAECGNDKIILCDRGTNFGYDNLVVDTLGFNIMKKVSKGSPVILDATHALQCRDPFGAASGGRRGQVAELSRAGLAVGLAGLFIESHPNPDKALCDGPSALPLSKVEPFLQQMKALDDLVKSFPELNTEN</sequence>
<dbReference type="EC" id="2.5.1.55" evidence="1"/>
<dbReference type="EMBL" id="BX842652">
    <property type="protein sequence ID" value="CAE80085.1"/>
    <property type="molecule type" value="Genomic_DNA"/>
</dbReference>
<dbReference type="SMR" id="P61653"/>
<dbReference type="STRING" id="264462.Bd2255"/>
<dbReference type="KEGG" id="bba:Bd2255"/>
<dbReference type="eggNOG" id="COG2877">
    <property type="taxonomic scope" value="Bacteria"/>
</dbReference>
<dbReference type="HOGENOM" id="CLU_036666_0_0_7"/>
<dbReference type="UniPathway" id="UPA00030"/>
<dbReference type="UniPathway" id="UPA00357">
    <property type="reaction ID" value="UER00474"/>
</dbReference>
<dbReference type="Proteomes" id="UP000008080">
    <property type="component" value="Chromosome"/>
</dbReference>
<dbReference type="GO" id="GO:0005737">
    <property type="term" value="C:cytoplasm"/>
    <property type="evidence" value="ECO:0007669"/>
    <property type="project" value="UniProtKB-SubCell"/>
</dbReference>
<dbReference type="GO" id="GO:0008676">
    <property type="term" value="F:3-deoxy-8-phosphooctulonate synthase activity"/>
    <property type="evidence" value="ECO:0007669"/>
    <property type="project" value="UniProtKB-UniRule"/>
</dbReference>
<dbReference type="GO" id="GO:0019294">
    <property type="term" value="P:keto-3-deoxy-D-manno-octulosonic acid biosynthetic process"/>
    <property type="evidence" value="ECO:0007669"/>
    <property type="project" value="UniProtKB-UniRule"/>
</dbReference>
<dbReference type="FunFam" id="3.20.20.70:FF:000058">
    <property type="entry name" value="2-dehydro-3-deoxyphosphooctonate aldolase"/>
    <property type="match status" value="1"/>
</dbReference>
<dbReference type="Gene3D" id="3.20.20.70">
    <property type="entry name" value="Aldolase class I"/>
    <property type="match status" value="1"/>
</dbReference>
<dbReference type="HAMAP" id="MF_00056">
    <property type="entry name" value="KDO8P_synth"/>
    <property type="match status" value="1"/>
</dbReference>
<dbReference type="InterPro" id="IPR013785">
    <property type="entry name" value="Aldolase_TIM"/>
</dbReference>
<dbReference type="InterPro" id="IPR006218">
    <property type="entry name" value="DAHP1/KDSA"/>
</dbReference>
<dbReference type="InterPro" id="IPR006269">
    <property type="entry name" value="KDO8P_synthase"/>
</dbReference>
<dbReference type="NCBIfam" id="TIGR01362">
    <property type="entry name" value="KDO8P_synth"/>
    <property type="match status" value="1"/>
</dbReference>
<dbReference type="NCBIfam" id="NF003543">
    <property type="entry name" value="PRK05198.1"/>
    <property type="match status" value="1"/>
</dbReference>
<dbReference type="NCBIfam" id="NF009109">
    <property type="entry name" value="PRK12457.1"/>
    <property type="match status" value="1"/>
</dbReference>
<dbReference type="PANTHER" id="PTHR21057">
    <property type="entry name" value="PHOSPHO-2-DEHYDRO-3-DEOXYHEPTONATE ALDOLASE"/>
    <property type="match status" value="1"/>
</dbReference>
<dbReference type="Pfam" id="PF00793">
    <property type="entry name" value="DAHP_synth_1"/>
    <property type="match status" value="1"/>
</dbReference>
<dbReference type="SUPFAM" id="SSF51569">
    <property type="entry name" value="Aldolase"/>
    <property type="match status" value="1"/>
</dbReference>
<gene>
    <name evidence="1" type="primary">kdsA</name>
    <name type="ordered locus">Bd2255</name>
</gene>
<proteinExistence type="inferred from homology"/>
<keyword id="KW-0963">Cytoplasm</keyword>
<keyword id="KW-0448">Lipopolysaccharide biosynthesis</keyword>
<keyword id="KW-1185">Reference proteome</keyword>
<keyword id="KW-0808">Transferase</keyword>
<accession>P61653</accession>
<feature type="chain" id="PRO_0000187102" description="2-dehydro-3-deoxyphosphooctonate aldolase">
    <location>
        <begin position="1"/>
        <end position="288"/>
    </location>
</feature>
<comment type="catalytic activity">
    <reaction evidence="1">
        <text>D-arabinose 5-phosphate + phosphoenolpyruvate + H2O = 3-deoxy-alpha-D-manno-2-octulosonate-8-phosphate + phosphate</text>
        <dbReference type="Rhea" id="RHEA:14053"/>
        <dbReference type="ChEBI" id="CHEBI:15377"/>
        <dbReference type="ChEBI" id="CHEBI:43474"/>
        <dbReference type="ChEBI" id="CHEBI:57693"/>
        <dbReference type="ChEBI" id="CHEBI:58702"/>
        <dbReference type="ChEBI" id="CHEBI:85985"/>
        <dbReference type="EC" id="2.5.1.55"/>
    </reaction>
</comment>
<comment type="pathway">
    <text evidence="1">Carbohydrate biosynthesis; 3-deoxy-D-manno-octulosonate biosynthesis; 3-deoxy-D-manno-octulosonate from D-ribulose 5-phosphate: step 2/3.</text>
</comment>
<comment type="pathway">
    <text evidence="1">Bacterial outer membrane biogenesis; lipopolysaccharide biosynthesis.</text>
</comment>
<comment type="subcellular location">
    <subcellularLocation>
        <location evidence="1">Cytoplasm</location>
    </subcellularLocation>
</comment>
<comment type="similarity">
    <text evidence="1">Belongs to the KdsA family.</text>
</comment>
<protein>
    <recommendedName>
        <fullName evidence="1">2-dehydro-3-deoxyphosphooctonate aldolase</fullName>
        <ecNumber evidence="1">2.5.1.55</ecNumber>
    </recommendedName>
    <alternativeName>
        <fullName evidence="1">3-deoxy-D-manno-octulosonic acid 8-phosphate synthase</fullName>
    </alternativeName>
    <alternativeName>
        <fullName evidence="1">KDO-8-phosphate synthase</fullName>
        <shortName evidence="1">KDO 8-P synthase</shortName>
        <shortName evidence="1">KDOPS</shortName>
    </alternativeName>
    <alternativeName>
        <fullName evidence="1">Phospho-2-dehydro-3-deoxyoctonate aldolase</fullName>
    </alternativeName>
</protein>
<organism>
    <name type="scientific">Bdellovibrio bacteriovorus (strain ATCC 15356 / DSM 50701 / NCIMB 9529 / HD100)</name>
    <dbReference type="NCBI Taxonomy" id="264462"/>
    <lineage>
        <taxon>Bacteria</taxon>
        <taxon>Pseudomonadati</taxon>
        <taxon>Bdellovibrionota</taxon>
        <taxon>Bdellovibrionia</taxon>
        <taxon>Bdellovibrionales</taxon>
        <taxon>Pseudobdellovibrionaceae</taxon>
        <taxon>Bdellovibrio</taxon>
    </lineage>
</organism>